<evidence type="ECO:0000250" key="1"/>
<evidence type="ECO:0000305" key="2"/>
<accession>Q98QD8</accession>
<comment type="function">
    <text evidence="1">Catalyzes the GTP-dependent ribosomal translocation step during translation elongation. During this step, the ribosome changes from the pre-translocational (PRE) to the post-translocational (POST) state as the newly formed A-site-bound peptidyl-tRNA and P-site-bound deacylated tRNA move to the P and E sites, respectively. Catalyzes the coordinated movement of the two tRNA molecules, the mRNA and conformational changes in the ribosome (By similarity).</text>
</comment>
<comment type="subcellular location">
    <subcellularLocation>
        <location evidence="1">Cytoplasm</location>
    </subcellularLocation>
</comment>
<comment type="similarity">
    <text evidence="2">Belongs to the TRAFAC class translation factor GTPase superfamily. Classic translation factor GTPase family. EF-G/EF-2 subfamily.</text>
</comment>
<comment type="sequence caution" evidence="2">
    <conflict type="erroneous initiation">
        <sequence resource="EMBL-CDS" id="CAC13601"/>
    </conflict>
</comment>
<reference key="1">
    <citation type="journal article" date="2001" name="Nucleic Acids Res.">
        <title>The complete genome sequence of the murine respiratory pathogen Mycoplasma pulmonis.</title>
        <authorList>
            <person name="Chambaud I."/>
            <person name="Heilig R."/>
            <person name="Ferris S."/>
            <person name="Barbe V."/>
            <person name="Samson D."/>
            <person name="Galisson F."/>
            <person name="Moszer I."/>
            <person name="Dybvig K."/>
            <person name="Wroblewski H."/>
            <person name="Viari A."/>
            <person name="Rocha E.P.C."/>
            <person name="Blanchard A."/>
        </authorList>
    </citation>
    <scope>NUCLEOTIDE SEQUENCE [LARGE SCALE GENOMIC DNA]</scope>
    <source>
        <strain>UAB CTIP</strain>
    </source>
</reference>
<proteinExistence type="inferred from homology"/>
<keyword id="KW-0963">Cytoplasm</keyword>
<keyword id="KW-0251">Elongation factor</keyword>
<keyword id="KW-0342">GTP-binding</keyword>
<keyword id="KW-0547">Nucleotide-binding</keyword>
<keyword id="KW-0648">Protein biosynthesis</keyword>
<keyword id="KW-1185">Reference proteome</keyword>
<sequence length="692" mass="77010">MSREYDLKDYRNIGIMAHIDAGKTTTTERILFHTGKIHKIGETHDGGSQMDFMAQEKERGITITSAATTAFWRGKRINIIDTPGHVDFTVEVERSLRVLDGAVAVLDAQSGVEPQTETVWRQATNYKVPRIVFVNKMDKAGANLEESIKSVKTRLNGNAVAIQLNMGSESDYRGHIDLVEMKAWEFDGKPEENGKEIEIPAEYLEAAQIERSKLIEAVSSFDDEVMMLALEEQEIPVDLLKSAIRKATLTSEFFPVVCGTAFKNKGVKAMIDAVVDYLPSPLDVPAIKGYFQEKEVLVTASDENDFSALAFKIMNDPFVGSLTFFRVYSGILSKGSYVYNTTKDKKERIGRILQMHANSREEIDEVRTGDIAAAVGLKDTTTGDTIVGDKSKHIILEKMVFPEPVISQALEPESKAATEKLSLGLQKLAAEDPTFRTFTDTETGQTIIAGMGELHLDIIVDRLRREFGVQVKVGAPQVSYRETITAKADVEGKYIKQSGGKGQYGHVWITFEPNPNNGFEFVDKIVGGKIPKEYIKTIQKGLEEKMASGILAGYPMIDLKATLFDGSYHEVDSSEMAYKIAASMALTKAKDVVKTVLLEPIMDVSVVFPKEYYGDVVGDLSRRRGQIINDETRSDGASVIKSHVPLSEMFGYATDLRSMTKGRGTYQMHFDHYERTPRNIADEIIKKRNIKN</sequence>
<gene>
    <name type="primary">fusA</name>
    <name type="ordered locus">MYPU_4280</name>
</gene>
<protein>
    <recommendedName>
        <fullName>Elongation factor G</fullName>
        <shortName>EF-G</shortName>
    </recommendedName>
</protein>
<organism>
    <name type="scientific">Mycoplasmopsis pulmonis (strain UAB CTIP)</name>
    <name type="common">Mycoplasma pulmonis</name>
    <dbReference type="NCBI Taxonomy" id="272635"/>
    <lineage>
        <taxon>Bacteria</taxon>
        <taxon>Bacillati</taxon>
        <taxon>Mycoplasmatota</taxon>
        <taxon>Mycoplasmoidales</taxon>
        <taxon>Metamycoplasmataceae</taxon>
        <taxon>Mycoplasmopsis</taxon>
    </lineage>
</organism>
<dbReference type="EMBL" id="AL445564">
    <property type="protein sequence ID" value="CAC13601.1"/>
    <property type="status" value="ALT_INIT"/>
    <property type="molecule type" value="Genomic_DNA"/>
</dbReference>
<dbReference type="PIR" id="D90565">
    <property type="entry name" value="D90565"/>
</dbReference>
<dbReference type="RefSeq" id="WP_041364095.1">
    <property type="nucleotide sequence ID" value="NC_002771.1"/>
</dbReference>
<dbReference type="SMR" id="Q98QD8"/>
<dbReference type="STRING" id="272635.gene:17577028"/>
<dbReference type="KEGG" id="mpu:MYPU_4280"/>
<dbReference type="eggNOG" id="COG0480">
    <property type="taxonomic scope" value="Bacteria"/>
</dbReference>
<dbReference type="HOGENOM" id="CLU_002794_4_1_14"/>
<dbReference type="BioCyc" id="MPUL272635:G1GT6-432-MONOMER"/>
<dbReference type="Proteomes" id="UP000000528">
    <property type="component" value="Chromosome"/>
</dbReference>
<dbReference type="GO" id="GO:0005737">
    <property type="term" value="C:cytoplasm"/>
    <property type="evidence" value="ECO:0007669"/>
    <property type="project" value="UniProtKB-SubCell"/>
</dbReference>
<dbReference type="GO" id="GO:0005525">
    <property type="term" value="F:GTP binding"/>
    <property type="evidence" value="ECO:0007669"/>
    <property type="project" value="UniProtKB-UniRule"/>
</dbReference>
<dbReference type="GO" id="GO:0003924">
    <property type="term" value="F:GTPase activity"/>
    <property type="evidence" value="ECO:0007669"/>
    <property type="project" value="InterPro"/>
</dbReference>
<dbReference type="GO" id="GO:0003746">
    <property type="term" value="F:translation elongation factor activity"/>
    <property type="evidence" value="ECO:0007669"/>
    <property type="project" value="UniProtKB-UniRule"/>
</dbReference>
<dbReference type="GO" id="GO:0032790">
    <property type="term" value="P:ribosome disassembly"/>
    <property type="evidence" value="ECO:0007669"/>
    <property type="project" value="TreeGrafter"/>
</dbReference>
<dbReference type="CDD" id="cd01886">
    <property type="entry name" value="EF-G"/>
    <property type="match status" value="1"/>
</dbReference>
<dbReference type="CDD" id="cd16262">
    <property type="entry name" value="EFG_III"/>
    <property type="match status" value="1"/>
</dbReference>
<dbReference type="CDD" id="cd01434">
    <property type="entry name" value="EFG_mtEFG1_IV"/>
    <property type="match status" value="1"/>
</dbReference>
<dbReference type="CDD" id="cd03713">
    <property type="entry name" value="EFG_mtEFG_C"/>
    <property type="match status" value="1"/>
</dbReference>
<dbReference type="CDD" id="cd04088">
    <property type="entry name" value="EFG_mtEFG_II"/>
    <property type="match status" value="1"/>
</dbReference>
<dbReference type="FunFam" id="2.40.30.10:FF:000006">
    <property type="entry name" value="Elongation factor G"/>
    <property type="match status" value="1"/>
</dbReference>
<dbReference type="FunFam" id="3.30.230.10:FF:000003">
    <property type="entry name" value="Elongation factor G"/>
    <property type="match status" value="1"/>
</dbReference>
<dbReference type="FunFam" id="3.30.70.240:FF:000001">
    <property type="entry name" value="Elongation factor G"/>
    <property type="match status" value="1"/>
</dbReference>
<dbReference type="FunFam" id="3.30.70.870:FF:000001">
    <property type="entry name" value="Elongation factor G"/>
    <property type="match status" value="1"/>
</dbReference>
<dbReference type="FunFam" id="3.40.50.300:FF:000029">
    <property type="entry name" value="Elongation factor G"/>
    <property type="match status" value="1"/>
</dbReference>
<dbReference type="Gene3D" id="3.30.230.10">
    <property type="match status" value="1"/>
</dbReference>
<dbReference type="Gene3D" id="3.30.70.240">
    <property type="match status" value="1"/>
</dbReference>
<dbReference type="Gene3D" id="3.30.70.870">
    <property type="entry name" value="Elongation Factor G (Translational Gtpase), domain 3"/>
    <property type="match status" value="1"/>
</dbReference>
<dbReference type="Gene3D" id="3.40.50.300">
    <property type="entry name" value="P-loop containing nucleotide triphosphate hydrolases"/>
    <property type="match status" value="1"/>
</dbReference>
<dbReference type="Gene3D" id="2.40.30.10">
    <property type="entry name" value="Translation factors"/>
    <property type="match status" value="1"/>
</dbReference>
<dbReference type="HAMAP" id="MF_00054_B">
    <property type="entry name" value="EF_G_EF_2_B"/>
    <property type="match status" value="1"/>
</dbReference>
<dbReference type="InterPro" id="IPR041095">
    <property type="entry name" value="EFG_II"/>
</dbReference>
<dbReference type="InterPro" id="IPR009022">
    <property type="entry name" value="EFG_III"/>
</dbReference>
<dbReference type="InterPro" id="IPR035647">
    <property type="entry name" value="EFG_III/V"/>
</dbReference>
<dbReference type="InterPro" id="IPR047872">
    <property type="entry name" value="EFG_IV"/>
</dbReference>
<dbReference type="InterPro" id="IPR035649">
    <property type="entry name" value="EFG_V"/>
</dbReference>
<dbReference type="InterPro" id="IPR000640">
    <property type="entry name" value="EFG_V-like"/>
</dbReference>
<dbReference type="InterPro" id="IPR004161">
    <property type="entry name" value="EFTu-like_2"/>
</dbReference>
<dbReference type="InterPro" id="IPR031157">
    <property type="entry name" value="G_TR_CS"/>
</dbReference>
<dbReference type="InterPro" id="IPR027417">
    <property type="entry name" value="P-loop_NTPase"/>
</dbReference>
<dbReference type="InterPro" id="IPR020568">
    <property type="entry name" value="Ribosomal_Su5_D2-typ_SF"/>
</dbReference>
<dbReference type="InterPro" id="IPR014721">
    <property type="entry name" value="Ribsml_uS5_D2-typ_fold_subgr"/>
</dbReference>
<dbReference type="InterPro" id="IPR005225">
    <property type="entry name" value="Small_GTP-bd"/>
</dbReference>
<dbReference type="InterPro" id="IPR000795">
    <property type="entry name" value="T_Tr_GTP-bd_dom"/>
</dbReference>
<dbReference type="InterPro" id="IPR009000">
    <property type="entry name" value="Transl_B-barrel_sf"/>
</dbReference>
<dbReference type="InterPro" id="IPR004540">
    <property type="entry name" value="Transl_elong_EFG/EF2"/>
</dbReference>
<dbReference type="InterPro" id="IPR005517">
    <property type="entry name" value="Transl_elong_EFG/EF2_IV"/>
</dbReference>
<dbReference type="NCBIfam" id="TIGR00484">
    <property type="entry name" value="EF-G"/>
    <property type="match status" value="1"/>
</dbReference>
<dbReference type="NCBIfam" id="NF009381">
    <property type="entry name" value="PRK12740.1-5"/>
    <property type="match status" value="1"/>
</dbReference>
<dbReference type="NCBIfam" id="TIGR00231">
    <property type="entry name" value="small_GTP"/>
    <property type="match status" value="1"/>
</dbReference>
<dbReference type="PANTHER" id="PTHR43261:SF1">
    <property type="entry name" value="RIBOSOME-RELEASING FACTOR 2, MITOCHONDRIAL"/>
    <property type="match status" value="1"/>
</dbReference>
<dbReference type="PANTHER" id="PTHR43261">
    <property type="entry name" value="TRANSLATION ELONGATION FACTOR G-RELATED"/>
    <property type="match status" value="1"/>
</dbReference>
<dbReference type="Pfam" id="PF00679">
    <property type="entry name" value="EFG_C"/>
    <property type="match status" value="1"/>
</dbReference>
<dbReference type="Pfam" id="PF14492">
    <property type="entry name" value="EFG_III"/>
    <property type="match status" value="1"/>
</dbReference>
<dbReference type="Pfam" id="PF03764">
    <property type="entry name" value="EFG_IV"/>
    <property type="match status" value="1"/>
</dbReference>
<dbReference type="Pfam" id="PF00009">
    <property type="entry name" value="GTP_EFTU"/>
    <property type="match status" value="1"/>
</dbReference>
<dbReference type="Pfam" id="PF03144">
    <property type="entry name" value="GTP_EFTU_D2"/>
    <property type="match status" value="1"/>
</dbReference>
<dbReference type="PRINTS" id="PR00315">
    <property type="entry name" value="ELONGATNFCT"/>
</dbReference>
<dbReference type="SMART" id="SM00838">
    <property type="entry name" value="EFG_C"/>
    <property type="match status" value="1"/>
</dbReference>
<dbReference type="SMART" id="SM00889">
    <property type="entry name" value="EFG_IV"/>
    <property type="match status" value="1"/>
</dbReference>
<dbReference type="SUPFAM" id="SSF54980">
    <property type="entry name" value="EF-G C-terminal domain-like"/>
    <property type="match status" value="2"/>
</dbReference>
<dbReference type="SUPFAM" id="SSF52540">
    <property type="entry name" value="P-loop containing nucleoside triphosphate hydrolases"/>
    <property type="match status" value="1"/>
</dbReference>
<dbReference type="SUPFAM" id="SSF54211">
    <property type="entry name" value="Ribosomal protein S5 domain 2-like"/>
    <property type="match status" value="1"/>
</dbReference>
<dbReference type="SUPFAM" id="SSF50447">
    <property type="entry name" value="Translation proteins"/>
    <property type="match status" value="1"/>
</dbReference>
<dbReference type="PROSITE" id="PS00301">
    <property type="entry name" value="G_TR_1"/>
    <property type="match status" value="1"/>
</dbReference>
<dbReference type="PROSITE" id="PS51722">
    <property type="entry name" value="G_TR_2"/>
    <property type="match status" value="1"/>
</dbReference>
<feature type="chain" id="PRO_0000091164" description="Elongation factor G">
    <location>
        <begin position="1"/>
        <end position="692"/>
    </location>
</feature>
<feature type="domain" description="tr-type G">
    <location>
        <begin position="8"/>
        <end position="282"/>
    </location>
</feature>
<feature type="binding site" evidence="1">
    <location>
        <begin position="17"/>
        <end position="24"/>
    </location>
    <ligand>
        <name>GTP</name>
        <dbReference type="ChEBI" id="CHEBI:37565"/>
    </ligand>
</feature>
<feature type="binding site" evidence="1">
    <location>
        <begin position="81"/>
        <end position="85"/>
    </location>
    <ligand>
        <name>GTP</name>
        <dbReference type="ChEBI" id="CHEBI:37565"/>
    </ligand>
</feature>
<feature type="binding site" evidence="1">
    <location>
        <begin position="135"/>
        <end position="138"/>
    </location>
    <ligand>
        <name>GTP</name>
        <dbReference type="ChEBI" id="CHEBI:37565"/>
    </ligand>
</feature>
<name>EFG_MYCPU</name>